<name>KAE1B_METS3</name>
<evidence type="ECO:0000255" key="1">
    <source>
        <dbReference type="HAMAP-Rule" id="MF_01447"/>
    </source>
</evidence>
<dbReference type="EC" id="2.3.1.234" evidence="1"/>
<dbReference type="EC" id="2.7.11.1" evidence="1"/>
<dbReference type="EMBL" id="CP000678">
    <property type="protein sequence ID" value="ABQ87403.1"/>
    <property type="molecule type" value="Genomic_DNA"/>
</dbReference>
<dbReference type="SMR" id="A5UMH5"/>
<dbReference type="STRING" id="420247.Msm_1198"/>
<dbReference type="EnsemblBacteria" id="ABQ87403">
    <property type="protein sequence ID" value="ABQ87403"/>
    <property type="gene ID" value="Msm_1198"/>
</dbReference>
<dbReference type="KEGG" id="msi:Msm_1198"/>
<dbReference type="PATRIC" id="fig|420247.28.peg.1197"/>
<dbReference type="eggNOG" id="arCOG01183">
    <property type="taxonomic scope" value="Archaea"/>
</dbReference>
<dbReference type="eggNOG" id="arCOG01185">
    <property type="taxonomic scope" value="Archaea"/>
</dbReference>
<dbReference type="HOGENOM" id="CLU_023208_2_2_2"/>
<dbReference type="BioCyc" id="MSMI420247:GHWZ-1233-MONOMER"/>
<dbReference type="Proteomes" id="UP000001992">
    <property type="component" value="Chromosome"/>
</dbReference>
<dbReference type="GO" id="GO:0005737">
    <property type="term" value="C:cytoplasm"/>
    <property type="evidence" value="ECO:0007669"/>
    <property type="project" value="UniProtKB-SubCell"/>
</dbReference>
<dbReference type="GO" id="GO:0000408">
    <property type="term" value="C:EKC/KEOPS complex"/>
    <property type="evidence" value="ECO:0007669"/>
    <property type="project" value="InterPro"/>
</dbReference>
<dbReference type="GO" id="GO:0005524">
    <property type="term" value="F:ATP binding"/>
    <property type="evidence" value="ECO:0007669"/>
    <property type="project" value="UniProtKB-UniRule"/>
</dbReference>
<dbReference type="GO" id="GO:0005506">
    <property type="term" value="F:iron ion binding"/>
    <property type="evidence" value="ECO:0007669"/>
    <property type="project" value="UniProtKB-UniRule"/>
</dbReference>
<dbReference type="GO" id="GO:0004222">
    <property type="term" value="F:metalloendopeptidase activity"/>
    <property type="evidence" value="ECO:0007669"/>
    <property type="project" value="InterPro"/>
</dbReference>
<dbReference type="GO" id="GO:0061711">
    <property type="term" value="F:N(6)-L-threonylcarbamoyladenine synthase activity"/>
    <property type="evidence" value="ECO:0007669"/>
    <property type="project" value="UniProtKB-EC"/>
</dbReference>
<dbReference type="GO" id="GO:0106310">
    <property type="term" value="F:protein serine kinase activity"/>
    <property type="evidence" value="ECO:0007669"/>
    <property type="project" value="RHEA"/>
</dbReference>
<dbReference type="GO" id="GO:0004674">
    <property type="term" value="F:protein serine/threonine kinase activity"/>
    <property type="evidence" value="ECO:0007669"/>
    <property type="project" value="UniProtKB-KW"/>
</dbReference>
<dbReference type="GO" id="GO:0004712">
    <property type="term" value="F:protein serine/threonine/tyrosine kinase activity"/>
    <property type="evidence" value="ECO:0007669"/>
    <property type="project" value="UniProtKB-UniRule"/>
</dbReference>
<dbReference type="GO" id="GO:0008270">
    <property type="term" value="F:zinc ion binding"/>
    <property type="evidence" value="ECO:0007669"/>
    <property type="project" value="InterPro"/>
</dbReference>
<dbReference type="GO" id="GO:0002949">
    <property type="term" value="P:tRNA threonylcarbamoyladenosine modification"/>
    <property type="evidence" value="ECO:0007669"/>
    <property type="project" value="UniProtKB-UniRule"/>
</dbReference>
<dbReference type="CDD" id="cd24131">
    <property type="entry name" value="ASKHA_NBD_Kae1_arch_bac"/>
    <property type="match status" value="1"/>
</dbReference>
<dbReference type="FunFam" id="3.30.420.40:FF:000038">
    <property type="entry name" value="Probable tRNA N6-adenosine threonylcarbamoyltransferase"/>
    <property type="match status" value="1"/>
</dbReference>
<dbReference type="FunFam" id="3.30.200.20:FF:000201">
    <property type="entry name" value="TP53-regulating kinase isoform X1"/>
    <property type="match status" value="1"/>
</dbReference>
<dbReference type="Gene3D" id="3.30.420.40">
    <property type="match status" value="2"/>
</dbReference>
<dbReference type="Gene3D" id="3.30.200.20">
    <property type="entry name" value="Phosphorylase Kinase, domain 1"/>
    <property type="match status" value="1"/>
</dbReference>
<dbReference type="Gene3D" id="1.10.510.10">
    <property type="entry name" value="Transferase(Phosphotransferase) domain 1"/>
    <property type="match status" value="1"/>
</dbReference>
<dbReference type="HAMAP" id="MF_01446">
    <property type="entry name" value="Kae1"/>
    <property type="match status" value="1"/>
</dbReference>
<dbReference type="HAMAP" id="MF_01447">
    <property type="entry name" value="Kae1_Bud32_arch"/>
    <property type="match status" value="1"/>
</dbReference>
<dbReference type="InterPro" id="IPR043129">
    <property type="entry name" value="ATPase_NBD"/>
</dbReference>
<dbReference type="InterPro" id="IPR022495">
    <property type="entry name" value="Bud32"/>
</dbReference>
<dbReference type="InterPro" id="IPR000905">
    <property type="entry name" value="Gcp-like_dom"/>
</dbReference>
<dbReference type="InterPro" id="IPR017861">
    <property type="entry name" value="KAE1/TsaD"/>
</dbReference>
<dbReference type="InterPro" id="IPR034680">
    <property type="entry name" value="Kae1_archaea_euk"/>
</dbReference>
<dbReference type="InterPro" id="IPR011009">
    <property type="entry name" value="Kinase-like_dom_sf"/>
</dbReference>
<dbReference type="InterPro" id="IPR017860">
    <property type="entry name" value="Peptidase_M22_CS"/>
</dbReference>
<dbReference type="InterPro" id="IPR000719">
    <property type="entry name" value="Prot_kinase_dom"/>
</dbReference>
<dbReference type="InterPro" id="IPR009220">
    <property type="entry name" value="tRNA_threonyl_synthase/kinase"/>
</dbReference>
<dbReference type="InterPro" id="IPR008266">
    <property type="entry name" value="Tyr_kinase_AS"/>
</dbReference>
<dbReference type="NCBIfam" id="TIGR03724">
    <property type="entry name" value="arch_bud32"/>
    <property type="match status" value="1"/>
</dbReference>
<dbReference type="NCBIfam" id="TIGR03722">
    <property type="entry name" value="arch_KAE1"/>
    <property type="match status" value="1"/>
</dbReference>
<dbReference type="NCBIfam" id="TIGR00329">
    <property type="entry name" value="gcp_kae1"/>
    <property type="match status" value="1"/>
</dbReference>
<dbReference type="NCBIfam" id="NF007174">
    <property type="entry name" value="PRK09605.1"/>
    <property type="match status" value="1"/>
</dbReference>
<dbReference type="NCBIfam" id="NF011462">
    <property type="entry name" value="PRK14879.1-3"/>
    <property type="match status" value="1"/>
</dbReference>
<dbReference type="PANTHER" id="PTHR11735">
    <property type="entry name" value="TRNA N6-ADENOSINE THREONYLCARBAMOYLTRANSFERASE"/>
    <property type="match status" value="1"/>
</dbReference>
<dbReference type="PANTHER" id="PTHR11735:SF14">
    <property type="entry name" value="TRNA N6-ADENOSINE THREONYLCARBAMOYLTRANSFERASE"/>
    <property type="match status" value="1"/>
</dbReference>
<dbReference type="Pfam" id="PF00814">
    <property type="entry name" value="TsaD"/>
    <property type="match status" value="1"/>
</dbReference>
<dbReference type="PIRSF" id="PIRSF036401">
    <property type="entry name" value="Gcp_STYKS"/>
    <property type="match status" value="1"/>
</dbReference>
<dbReference type="PRINTS" id="PR00789">
    <property type="entry name" value="OSIALOPTASE"/>
</dbReference>
<dbReference type="SUPFAM" id="SSF53067">
    <property type="entry name" value="Actin-like ATPase domain"/>
    <property type="match status" value="1"/>
</dbReference>
<dbReference type="SUPFAM" id="SSF56112">
    <property type="entry name" value="Protein kinase-like (PK-like)"/>
    <property type="match status" value="1"/>
</dbReference>
<dbReference type="PROSITE" id="PS01016">
    <property type="entry name" value="GLYCOPROTEASE"/>
    <property type="match status" value="1"/>
</dbReference>
<dbReference type="PROSITE" id="PS50011">
    <property type="entry name" value="PROTEIN_KINASE_DOM"/>
    <property type="match status" value="1"/>
</dbReference>
<dbReference type="PROSITE" id="PS00109">
    <property type="entry name" value="PROTEIN_KINASE_TYR"/>
    <property type="match status" value="1"/>
</dbReference>
<proteinExistence type="inferred from homology"/>
<feature type="chain" id="PRO_0000303650" description="Probable bifunctional tRNA threonylcarbamoyladenosine biosynthesis protein">
    <location>
        <begin position="1"/>
        <end position="538"/>
    </location>
</feature>
<feature type="domain" description="Protein kinase" evidence="1">
    <location>
        <begin position="336"/>
        <end position="538"/>
    </location>
</feature>
<feature type="region of interest" description="Kae1">
    <location>
        <begin position="1"/>
        <end position="327"/>
    </location>
</feature>
<feature type="active site" description="Proton acceptor; for kinase activity" evidence="1">
    <location>
        <position position="452"/>
    </location>
</feature>
<feature type="binding site" evidence="1">
    <location>
        <position position="111"/>
    </location>
    <ligand>
        <name>Fe cation</name>
        <dbReference type="ChEBI" id="CHEBI:24875"/>
    </ligand>
</feature>
<feature type="binding site" evidence="1">
    <location>
        <position position="115"/>
    </location>
    <ligand>
        <name>Fe cation</name>
        <dbReference type="ChEBI" id="CHEBI:24875"/>
    </ligand>
</feature>
<feature type="binding site" evidence="1">
    <location>
        <begin position="132"/>
        <end position="136"/>
    </location>
    <ligand>
        <name>L-threonylcarbamoyladenylate</name>
        <dbReference type="ChEBI" id="CHEBI:73682"/>
    </ligand>
</feature>
<feature type="binding site" evidence="1">
    <location>
        <position position="132"/>
    </location>
    <ligand>
        <name>Fe cation</name>
        <dbReference type="ChEBI" id="CHEBI:24875"/>
    </ligand>
</feature>
<feature type="binding site" evidence="1">
    <location>
        <position position="164"/>
    </location>
    <ligand>
        <name>L-threonylcarbamoyladenylate</name>
        <dbReference type="ChEBI" id="CHEBI:73682"/>
    </ligand>
</feature>
<feature type="binding site" evidence="1">
    <location>
        <position position="177"/>
    </location>
    <ligand>
        <name>L-threonylcarbamoyladenylate</name>
        <dbReference type="ChEBI" id="CHEBI:73682"/>
    </ligand>
</feature>
<feature type="binding site" evidence="1">
    <location>
        <position position="181"/>
    </location>
    <ligand>
        <name>L-threonylcarbamoyladenylate</name>
        <dbReference type="ChEBI" id="CHEBI:73682"/>
    </ligand>
</feature>
<feature type="binding site" evidence="1">
    <location>
        <position position="260"/>
    </location>
    <ligand>
        <name>L-threonylcarbamoyladenylate</name>
        <dbReference type="ChEBI" id="CHEBI:73682"/>
    </ligand>
</feature>
<feature type="binding site" evidence="1">
    <location>
        <position position="288"/>
    </location>
    <ligand>
        <name>Fe cation</name>
        <dbReference type="ChEBI" id="CHEBI:24875"/>
    </ligand>
</feature>
<feature type="binding site" evidence="1">
    <location>
        <begin position="342"/>
        <end position="350"/>
    </location>
    <ligand>
        <name>ATP</name>
        <dbReference type="ChEBI" id="CHEBI:30616"/>
    </ligand>
</feature>
<feature type="binding site" evidence="1">
    <location>
        <position position="363"/>
    </location>
    <ligand>
        <name>ATP</name>
        <dbReference type="ChEBI" id="CHEBI:30616"/>
    </ligand>
</feature>
<keyword id="KW-0012">Acyltransferase</keyword>
<keyword id="KW-0067">ATP-binding</keyword>
<keyword id="KW-0963">Cytoplasm</keyword>
<keyword id="KW-0408">Iron</keyword>
<keyword id="KW-0418">Kinase</keyword>
<keyword id="KW-0479">Metal-binding</keyword>
<keyword id="KW-0511">Multifunctional enzyme</keyword>
<keyword id="KW-0547">Nucleotide-binding</keyword>
<keyword id="KW-0723">Serine/threonine-protein kinase</keyword>
<keyword id="KW-0808">Transferase</keyword>
<keyword id="KW-0819">tRNA processing</keyword>
<reference key="1">
    <citation type="journal article" date="2007" name="Proc. Natl. Acad. Sci. U.S.A.">
        <title>Genomic and metabolic adaptations of Methanobrevibacter smithii to the human gut.</title>
        <authorList>
            <person name="Samuel B.S."/>
            <person name="Hansen E.E."/>
            <person name="Manchester J.K."/>
            <person name="Coutinho P.M."/>
            <person name="Henrissat B."/>
            <person name="Fulton R."/>
            <person name="Latreille P."/>
            <person name="Kim K."/>
            <person name="Wilson R.K."/>
            <person name="Gordon J.I."/>
        </authorList>
    </citation>
    <scope>NUCLEOTIDE SEQUENCE [LARGE SCALE GENOMIC DNA]</scope>
    <source>
        <strain>ATCC 35061 / DSM 861 / OCM 144 / PS</strain>
    </source>
</reference>
<sequence length="538" mass="58785">MIVLICLGIEGTAEKTGVGIVDSDGNILAMAGEQLFPEKGGIHPRIAAEHHGYWIPKLIPKAIDEAGISYDDLDLISFSQGPGLGPALRIVATSARTLALSLNKPIIGVNHCIGHVEVGKLDTGAVNPVTLYVSGGNSQVISHESGRYRIFGETLDIAAGNCLDHFGRETGLGHPGGPVIEKLAKKGSYVDLPYVVKGMDFSFSGLLSAALREVKKGTPIEDVCFSLQETAFSMLVEVTERALSHTQKDEVMLCGGVSANSRLREMLKVMAEEHGAKFCMPEMKLCGDNGVMIAWLGLIMHNQFGPLDIKDTGIIQRFRTDEVEAPWVNNNDSHLKLPDNLIAKGAESDIIKSSYLGKNAVLKSRIPKAYRIAEIDSKIRKSRTKLEAKLLSDVKKSGVITPVLYDVDLENKSILMEAIEGKMLKEVIDDNLAYKIGVEIAKIHSLDIIHGDITTSNMMLRGGKLVFLDFGLGRHSDLFEDKAVDLLVLKKSLQSIDNTTASKYFDNVLEGYAESYGKNKDKIIEKIKEIESRGRYTH</sequence>
<comment type="function">
    <text evidence="1">Required for the formation of a threonylcarbamoyl group on adenosine at position 37 (t(6)A37) in tRNAs that read codons beginning with adenine. Is a component of the KEOPS complex that is probably involved in the transfer of the threonylcarbamoyl moiety of threonylcarbamoyl-AMP (TC-AMP) to the N6 group of A37. The Kae1 domain likely plays a direct catalytic role in this reaction. The Bud32 domain probably displays kinase activity that regulates Kae1 function.</text>
</comment>
<comment type="catalytic activity">
    <reaction evidence="1">
        <text>L-seryl-[protein] + ATP = O-phospho-L-seryl-[protein] + ADP + H(+)</text>
        <dbReference type="Rhea" id="RHEA:17989"/>
        <dbReference type="Rhea" id="RHEA-COMP:9863"/>
        <dbReference type="Rhea" id="RHEA-COMP:11604"/>
        <dbReference type="ChEBI" id="CHEBI:15378"/>
        <dbReference type="ChEBI" id="CHEBI:29999"/>
        <dbReference type="ChEBI" id="CHEBI:30616"/>
        <dbReference type="ChEBI" id="CHEBI:83421"/>
        <dbReference type="ChEBI" id="CHEBI:456216"/>
        <dbReference type="EC" id="2.7.11.1"/>
    </reaction>
</comment>
<comment type="catalytic activity">
    <reaction evidence="1">
        <text>L-threonyl-[protein] + ATP = O-phospho-L-threonyl-[protein] + ADP + H(+)</text>
        <dbReference type="Rhea" id="RHEA:46608"/>
        <dbReference type="Rhea" id="RHEA-COMP:11060"/>
        <dbReference type="Rhea" id="RHEA-COMP:11605"/>
        <dbReference type="ChEBI" id="CHEBI:15378"/>
        <dbReference type="ChEBI" id="CHEBI:30013"/>
        <dbReference type="ChEBI" id="CHEBI:30616"/>
        <dbReference type="ChEBI" id="CHEBI:61977"/>
        <dbReference type="ChEBI" id="CHEBI:456216"/>
        <dbReference type="EC" id="2.7.11.1"/>
    </reaction>
</comment>
<comment type="catalytic activity">
    <reaction evidence="1">
        <text>L-threonylcarbamoyladenylate + adenosine(37) in tRNA = N(6)-L-threonylcarbamoyladenosine(37) in tRNA + AMP + H(+)</text>
        <dbReference type="Rhea" id="RHEA:37059"/>
        <dbReference type="Rhea" id="RHEA-COMP:10162"/>
        <dbReference type="Rhea" id="RHEA-COMP:10163"/>
        <dbReference type="ChEBI" id="CHEBI:15378"/>
        <dbReference type="ChEBI" id="CHEBI:73682"/>
        <dbReference type="ChEBI" id="CHEBI:74411"/>
        <dbReference type="ChEBI" id="CHEBI:74418"/>
        <dbReference type="ChEBI" id="CHEBI:456215"/>
        <dbReference type="EC" id="2.3.1.234"/>
    </reaction>
</comment>
<comment type="cofactor">
    <cofactor evidence="1">
        <name>Fe(2+)</name>
        <dbReference type="ChEBI" id="CHEBI:29033"/>
    </cofactor>
    <text evidence="1">Binds 1 Fe(2+) ion per subunit.</text>
</comment>
<comment type="subunit">
    <text evidence="1">Component of the KEOPS complex that consists of Kae1, Bud32, Cgi121 and Pcc1; the whole complex dimerizes.</text>
</comment>
<comment type="subcellular location">
    <subcellularLocation>
        <location evidence="1">Cytoplasm</location>
    </subcellularLocation>
</comment>
<comment type="similarity">
    <text evidence="1">In the N-terminal section; belongs to the KAE1 / TsaD family.</text>
</comment>
<comment type="similarity">
    <text evidence="1">In the C-terminal section; belongs to the protein kinase superfamily. Tyr protein kinase family. BUD32 subfamily.</text>
</comment>
<accession>A5UMH5</accession>
<protein>
    <recommendedName>
        <fullName evidence="1">Probable bifunctional tRNA threonylcarbamoyladenosine biosynthesis protein</fullName>
    </recommendedName>
    <domain>
        <recommendedName>
            <fullName evidence="1">tRNA N6-adenosine threonylcarbamoyltransferase</fullName>
            <ecNumber evidence="1">2.3.1.234</ecNumber>
        </recommendedName>
        <alternativeName>
            <fullName>N6-L-threonylcarbamoyladenine synthase</fullName>
            <shortName>t(6)A synthase</shortName>
        </alternativeName>
        <alternativeName>
            <fullName evidence="1">t(6)A37 threonylcarbamoyladenosine biosynthesis protein Kae1</fullName>
        </alternativeName>
        <alternativeName>
            <fullName evidence="1">tRNA threonylcarbamoyladenosine biosynthesis protein Kae1</fullName>
        </alternativeName>
    </domain>
    <domain>
        <recommendedName>
            <fullName evidence="1">Serine/threonine-protein kinase Bud32</fullName>
            <ecNumber evidence="1">2.7.11.1</ecNumber>
        </recommendedName>
    </domain>
</protein>
<organism>
    <name type="scientific">Methanobrevibacter smithii (strain ATCC 35061 / DSM 861 / OCM 144 / PS)</name>
    <dbReference type="NCBI Taxonomy" id="420247"/>
    <lineage>
        <taxon>Archaea</taxon>
        <taxon>Methanobacteriati</taxon>
        <taxon>Methanobacteriota</taxon>
        <taxon>Methanomada group</taxon>
        <taxon>Methanobacteria</taxon>
        <taxon>Methanobacteriales</taxon>
        <taxon>Methanobacteriaceae</taxon>
        <taxon>Methanobrevibacter</taxon>
    </lineage>
</organism>
<gene>
    <name type="ordered locus">Msm_1198</name>
</gene>